<protein>
    <recommendedName>
        <fullName evidence="1">NADPH-dependent 7-cyano-7-deazaguanine reductase</fullName>
        <ecNumber evidence="1">1.7.1.13</ecNumber>
    </recommendedName>
    <alternativeName>
        <fullName evidence="1">7-cyano-7-carbaguanine reductase</fullName>
    </alternativeName>
    <alternativeName>
        <fullName evidence="1">NADPH-dependent nitrile oxidoreductase</fullName>
    </alternativeName>
    <alternativeName>
        <fullName evidence="1">PreQ(0) reductase</fullName>
    </alternativeName>
</protein>
<feature type="chain" id="PRO_1000148656" description="NADPH-dependent 7-cyano-7-deazaguanine reductase">
    <location>
        <begin position="1"/>
        <end position="281"/>
    </location>
</feature>
<feature type="active site" description="Thioimide intermediate" evidence="1">
    <location>
        <position position="188"/>
    </location>
</feature>
<feature type="active site" description="Proton donor" evidence="1">
    <location>
        <position position="195"/>
    </location>
</feature>
<feature type="binding site" evidence="1">
    <location>
        <begin position="81"/>
        <end position="83"/>
    </location>
    <ligand>
        <name>substrate</name>
    </ligand>
</feature>
<feature type="binding site" evidence="1">
    <location>
        <begin position="83"/>
        <end position="84"/>
    </location>
    <ligand>
        <name>NADPH</name>
        <dbReference type="ChEBI" id="CHEBI:57783"/>
    </ligand>
</feature>
<feature type="binding site" evidence="1">
    <location>
        <begin position="227"/>
        <end position="228"/>
    </location>
    <ligand>
        <name>substrate</name>
    </ligand>
</feature>
<feature type="binding site" evidence="1">
    <location>
        <begin position="256"/>
        <end position="257"/>
    </location>
    <ligand>
        <name>NADPH</name>
        <dbReference type="ChEBI" id="CHEBI:57783"/>
    </ligand>
</feature>
<name>QUEF_ACIET</name>
<evidence type="ECO:0000255" key="1">
    <source>
        <dbReference type="HAMAP-Rule" id="MF_00817"/>
    </source>
</evidence>
<keyword id="KW-0963">Cytoplasm</keyword>
<keyword id="KW-0521">NADP</keyword>
<keyword id="KW-0560">Oxidoreductase</keyword>
<keyword id="KW-0671">Queuosine biosynthesis</keyword>
<keyword id="KW-1185">Reference proteome</keyword>
<organism>
    <name type="scientific">Acidovorax ebreus (strain TPSY)</name>
    <name type="common">Diaphorobacter sp. (strain TPSY)</name>
    <dbReference type="NCBI Taxonomy" id="535289"/>
    <lineage>
        <taxon>Bacteria</taxon>
        <taxon>Pseudomonadati</taxon>
        <taxon>Pseudomonadota</taxon>
        <taxon>Betaproteobacteria</taxon>
        <taxon>Burkholderiales</taxon>
        <taxon>Comamonadaceae</taxon>
        <taxon>Diaphorobacter</taxon>
    </lineage>
</organism>
<sequence>MNTPEHSQLGKASAYADQYDASLLFPIPRADKRAEIGIDGNAPFFGADLWTAFELSWLNLRGKPQVAIAHITVPCETPHIVESKSFKLYLNSFNNTRFGDASEVQARLRADISEAVWRGAPHPATVGVKLIAPELFDQEPVHELDGLSLDRLDVECTRYQPAPDLLTATFNEAPVTETLTSNLLKSNCLVTGQPDWGSVQISYSGPQINQEGLLQYLVSFRNHNEFHEQCVERIFMDLWTRCKPIKLKVYARYTRRGGLDINPWRTSHPQTMPKNVRTARQ</sequence>
<reference key="1">
    <citation type="submission" date="2009-01" db="EMBL/GenBank/DDBJ databases">
        <title>Complete sequence of Diaphorobacter sp. TPSY.</title>
        <authorList>
            <consortium name="US DOE Joint Genome Institute"/>
            <person name="Lucas S."/>
            <person name="Copeland A."/>
            <person name="Lapidus A."/>
            <person name="Glavina del Rio T."/>
            <person name="Tice H."/>
            <person name="Bruce D."/>
            <person name="Goodwin L."/>
            <person name="Pitluck S."/>
            <person name="Chertkov O."/>
            <person name="Brettin T."/>
            <person name="Detter J.C."/>
            <person name="Han C."/>
            <person name="Larimer F."/>
            <person name="Land M."/>
            <person name="Hauser L."/>
            <person name="Kyrpides N."/>
            <person name="Mikhailova N."/>
            <person name="Coates J.D."/>
        </authorList>
    </citation>
    <scope>NUCLEOTIDE SEQUENCE [LARGE SCALE GENOMIC DNA]</scope>
    <source>
        <strain>TPSY</strain>
    </source>
</reference>
<accession>B9MDS3</accession>
<gene>
    <name evidence="1" type="primary">queF</name>
    <name type="ordered locus">Dtpsy_2647</name>
</gene>
<dbReference type="EC" id="1.7.1.13" evidence="1"/>
<dbReference type="EMBL" id="CP001392">
    <property type="protein sequence ID" value="ACM34082.1"/>
    <property type="molecule type" value="Genomic_DNA"/>
</dbReference>
<dbReference type="RefSeq" id="WP_015913989.1">
    <property type="nucleotide sequence ID" value="NC_011992.1"/>
</dbReference>
<dbReference type="SMR" id="B9MDS3"/>
<dbReference type="KEGG" id="dia:Dtpsy_2647"/>
<dbReference type="eggNOG" id="COG0780">
    <property type="taxonomic scope" value="Bacteria"/>
</dbReference>
<dbReference type="eggNOG" id="COG2904">
    <property type="taxonomic scope" value="Bacteria"/>
</dbReference>
<dbReference type="HOGENOM" id="CLU_054738_0_0_4"/>
<dbReference type="UniPathway" id="UPA00392"/>
<dbReference type="Proteomes" id="UP000000450">
    <property type="component" value="Chromosome"/>
</dbReference>
<dbReference type="GO" id="GO:0005737">
    <property type="term" value="C:cytoplasm"/>
    <property type="evidence" value="ECO:0007669"/>
    <property type="project" value="UniProtKB-SubCell"/>
</dbReference>
<dbReference type="GO" id="GO:0033739">
    <property type="term" value="F:preQ1 synthase activity"/>
    <property type="evidence" value="ECO:0007669"/>
    <property type="project" value="UniProtKB-UniRule"/>
</dbReference>
<dbReference type="GO" id="GO:0008616">
    <property type="term" value="P:queuosine biosynthetic process"/>
    <property type="evidence" value="ECO:0007669"/>
    <property type="project" value="UniProtKB-UniRule"/>
</dbReference>
<dbReference type="GO" id="GO:0006400">
    <property type="term" value="P:tRNA modification"/>
    <property type="evidence" value="ECO:0007669"/>
    <property type="project" value="UniProtKB-UniRule"/>
</dbReference>
<dbReference type="Gene3D" id="3.30.1130.10">
    <property type="match status" value="2"/>
</dbReference>
<dbReference type="HAMAP" id="MF_00817">
    <property type="entry name" value="QueF_type2"/>
    <property type="match status" value="1"/>
</dbReference>
<dbReference type="InterPro" id="IPR043133">
    <property type="entry name" value="GTP-CH-I_C/QueF"/>
</dbReference>
<dbReference type="InterPro" id="IPR050084">
    <property type="entry name" value="NADPH_dep_7-cyano-7-deazaG_red"/>
</dbReference>
<dbReference type="InterPro" id="IPR029500">
    <property type="entry name" value="QueF"/>
</dbReference>
<dbReference type="InterPro" id="IPR029139">
    <property type="entry name" value="QueF_N"/>
</dbReference>
<dbReference type="InterPro" id="IPR016428">
    <property type="entry name" value="QueF_type2"/>
</dbReference>
<dbReference type="NCBIfam" id="TIGR03138">
    <property type="entry name" value="QueF"/>
    <property type="match status" value="1"/>
</dbReference>
<dbReference type="PANTHER" id="PTHR34354">
    <property type="entry name" value="NADPH-DEPENDENT 7-CYANO-7-DEAZAGUANINE REDUCTASE"/>
    <property type="match status" value="1"/>
</dbReference>
<dbReference type="PANTHER" id="PTHR34354:SF1">
    <property type="entry name" value="NADPH-DEPENDENT 7-CYANO-7-DEAZAGUANINE REDUCTASE"/>
    <property type="match status" value="1"/>
</dbReference>
<dbReference type="Pfam" id="PF14489">
    <property type="entry name" value="QueF"/>
    <property type="match status" value="1"/>
</dbReference>
<dbReference type="Pfam" id="PF14819">
    <property type="entry name" value="QueF_N"/>
    <property type="match status" value="1"/>
</dbReference>
<dbReference type="PIRSF" id="PIRSF004750">
    <property type="entry name" value="Nitrile_oxidored_YqcD_prd"/>
    <property type="match status" value="1"/>
</dbReference>
<dbReference type="SUPFAM" id="SSF55620">
    <property type="entry name" value="Tetrahydrobiopterin biosynthesis enzymes-like"/>
    <property type="match status" value="1"/>
</dbReference>
<proteinExistence type="inferred from homology"/>
<comment type="function">
    <text evidence="1">Catalyzes the NADPH-dependent reduction of 7-cyano-7-deazaguanine (preQ0) to 7-aminomethyl-7-deazaguanine (preQ1).</text>
</comment>
<comment type="catalytic activity">
    <reaction evidence="1">
        <text>7-aminomethyl-7-carbaguanine + 2 NADP(+) = 7-cyano-7-deazaguanine + 2 NADPH + 3 H(+)</text>
        <dbReference type="Rhea" id="RHEA:13409"/>
        <dbReference type="ChEBI" id="CHEBI:15378"/>
        <dbReference type="ChEBI" id="CHEBI:45075"/>
        <dbReference type="ChEBI" id="CHEBI:57783"/>
        <dbReference type="ChEBI" id="CHEBI:58349"/>
        <dbReference type="ChEBI" id="CHEBI:58703"/>
        <dbReference type="EC" id="1.7.1.13"/>
    </reaction>
</comment>
<comment type="pathway">
    <text evidence="1">tRNA modification; tRNA-queuosine biosynthesis.</text>
</comment>
<comment type="subunit">
    <text evidence="1">Homodimer.</text>
</comment>
<comment type="subcellular location">
    <subcellularLocation>
        <location evidence="1">Cytoplasm</location>
    </subcellularLocation>
</comment>
<comment type="similarity">
    <text evidence="1">Belongs to the GTP cyclohydrolase I family. QueF type 2 subfamily.</text>
</comment>